<dbReference type="EMBL" id="X16613">
    <property type="protein sequence ID" value="CAA34613.1"/>
    <property type="molecule type" value="Genomic_DNA"/>
</dbReference>
<dbReference type="PIR" id="S07786">
    <property type="entry name" value="S07786"/>
</dbReference>
<accession>P14289</accession>
<proteinExistence type="predicted"/>
<protein>
    <recommendedName>
        <fullName>Uncharacterized 22 kDa protein in overamplified macronuclear DNA POB4</fullName>
    </recommendedName>
</protein>
<sequence>MSQLVREFGKDNKSLKEVTESLAQFVSGLERQECAICFGWGHLANSVPPKPPLIRPAGVTLSGKLSGGLSRPSTSLNQLLLGPTRLRCHPGPAMGGRRSGGRICLGDPGAAAIPTTTTAPTATHQPNQQRQQVIPQQMHGLARQYQRSNLVGNVAQYPFGSVANPIQQLISQFLSFYNSQSQYILLIHTKLDRKLHFVDQTGSF</sequence>
<reference key="1">
    <citation type="journal article" date="1989" name="Nucleic Acids Res.">
        <title>Identification of an amplification promoting DNA sequence from the hypotrichous ciliate Stylonychia lemnae.</title>
        <authorList>
            <person name="Wegner M."/>
            <person name="Helftenbein E."/>
            <person name="Mueller F."/>
            <person name="Meinecke M."/>
            <person name="Mueller S."/>
            <person name="Grummt F."/>
        </authorList>
    </citation>
    <scope>NUCLEOTIDE SEQUENCE [GENOMIC DNA]</scope>
    <source>
        <strain>FX-SP</strain>
    </source>
</reference>
<organism>
    <name type="scientific">Stylonychia lemnae</name>
    <name type="common">Ciliate</name>
    <dbReference type="NCBI Taxonomy" id="5949"/>
    <lineage>
        <taxon>Eukaryota</taxon>
        <taxon>Sar</taxon>
        <taxon>Alveolata</taxon>
        <taxon>Ciliophora</taxon>
        <taxon>Intramacronucleata</taxon>
        <taxon>Spirotrichea</taxon>
        <taxon>Stichotrichia</taxon>
        <taxon>Sporadotrichida</taxon>
        <taxon>Oxytrichidae</taxon>
        <taxon>Stylonychinae</taxon>
        <taxon>Stylonychia</taxon>
    </lineage>
</organism>
<name>YPOB_STYLE</name>
<feature type="chain" id="PRO_0000066407" description="Uncharacterized 22 kDa protein in overamplified macronuclear DNA POB4">
    <location>
        <begin position="1"/>
        <end position="204"/>
    </location>
</feature>